<feature type="chain" id="PRO_0000233617" description="Small ribosomal subunit protein uS17">
    <location>
        <begin position="1"/>
        <end position="89"/>
    </location>
</feature>
<name>RS17_XANOM</name>
<dbReference type="EMBL" id="AP008229">
    <property type="protein sequence ID" value="BAE70133.1"/>
    <property type="molecule type" value="Genomic_DNA"/>
</dbReference>
<dbReference type="RefSeq" id="WP_003486701.1">
    <property type="nucleotide sequence ID" value="NC_007705.1"/>
</dbReference>
<dbReference type="SMR" id="Q2NZZ4"/>
<dbReference type="GeneID" id="97509345"/>
<dbReference type="KEGG" id="xom:XOO3378"/>
<dbReference type="HOGENOM" id="CLU_073626_1_1_6"/>
<dbReference type="GO" id="GO:0022627">
    <property type="term" value="C:cytosolic small ribosomal subunit"/>
    <property type="evidence" value="ECO:0007669"/>
    <property type="project" value="TreeGrafter"/>
</dbReference>
<dbReference type="GO" id="GO:0019843">
    <property type="term" value="F:rRNA binding"/>
    <property type="evidence" value="ECO:0007669"/>
    <property type="project" value="UniProtKB-UniRule"/>
</dbReference>
<dbReference type="GO" id="GO:0003735">
    <property type="term" value="F:structural constituent of ribosome"/>
    <property type="evidence" value="ECO:0007669"/>
    <property type="project" value="InterPro"/>
</dbReference>
<dbReference type="GO" id="GO:0006412">
    <property type="term" value="P:translation"/>
    <property type="evidence" value="ECO:0007669"/>
    <property type="project" value="UniProtKB-UniRule"/>
</dbReference>
<dbReference type="CDD" id="cd00364">
    <property type="entry name" value="Ribosomal_uS17"/>
    <property type="match status" value="1"/>
</dbReference>
<dbReference type="FunFam" id="2.40.50.140:FF:000204">
    <property type="entry name" value="30S ribosomal protein S17"/>
    <property type="match status" value="1"/>
</dbReference>
<dbReference type="Gene3D" id="2.40.50.140">
    <property type="entry name" value="Nucleic acid-binding proteins"/>
    <property type="match status" value="1"/>
</dbReference>
<dbReference type="HAMAP" id="MF_01345_B">
    <property type="entry name" value="Ribosomal_uS17_B"/>
    <property type="match status" value="1"/>
</dbReference>
<dbReference type="InterPro" id="IPR012340">
    <property type="entry name" value="NA-bd_OB-fold"/>
</dbReference>
<dbReference type="InterPro" id="IPR000266">
    <property type="entry name" value="Ribosomal_uS17"/>
</dbReference>
<dbReference type="InterPro" id="IPR019984">
    <property type="entry name" value="Ribosomal_uS17_bact/chlr"/>
</dbReference>
<dbReference type="NCBIfam" id="NF004123">
    <property type="entry name" value="PRK05610.1"/>
    <property type="match status" value="1"/>
</dbReference>
<dbReference type="NCBIfam" id="TIGR03635">
    <property type="entry name" value="uS17_bact"/>
    <property type="match status" value="1"/>
</dbReference>
<dbReference type="PANTHER" id="PTHR10744">
    <property type="entry name" value="40S RIBOSOMAL PROTEIN S11 FAMILY MEMBER"/>
    <property type="match status" value="1"/>
</dbReference>
<dbReference type="PANTHER" id="PTHR10744:SF1">
    <property type="entry name" value="SMALL RIBOSOMAL SUBUNIT PROTEIN US17M"/>
    <property type="match status" value="1"/>
</dbReference>
<dbReference type="Pfam" id="PF00366">
    <property type="entry name" value="Ribosomal_S17"/>
    <property type="match status" value="1"/>
</dbReference>
<dbReference type="PRINTS" id="PR00973">
    <property type="entry name" value="RIBOSOMALS17"/>
</dbReference>
<dbReference type="SUPFAM" id="SSF50249">
    <property type="entry name" value="Nucleic acid-binding proteins"/>
    <property type="match status" value="1"/>
</dbReference>
<keyword id="KW-0687">Ribonucleoprotein</keyword>
<keyword id="KW-0689">Ribosomal protein</keyword>
<keyword id="KW-0694">RNA-binding</keyword>
<keyword id="KW-0699">rRNA-binding</keyword>
<comment type="function">
    <text evidence="1">One of the primary rRNA binding proteins, it binds specifically to the 5'-end of 16S ribosomal RNA.</text>
</comment>
<comment type="subunit">
    <text evidence="1">Part of the 30S ribosomal subunit.</text>
</comment>
<comment type="similarity">
    <text evidence="1">Belongs to the universal ribosomal protein uS17 family.</text>
</comment>
<sequence>MSDNNEKQTLRTVEGRVVSNKMDKTVTVLVERQVKHALYGKYIKRSTKLHAHDADNACNEGDVVRVTEIAPMSKTKNWRVVEIVTRSAE</sequence>
<protein>
    <recommendedName>
        <fullName evidence="1">Small ribosomal subunit protein uS17</fullName>
    </recommendedName>
    <alternativeName>
        <fullName evidence="2">30S ribosomal protein S17</fullName>
    </alternativeName>
</protein>
<organism>
    <name type="scientific">Xanthomonas oryzae pv. oryzae (strain MAFF 311018)</name>
    <dbReference type="NCBI Taxonomy" id="342109"/>
    <lineage>
        <taxon>Bacteria</taxon>
        <taxon>Pseudomonadati</taxon>
        <taxon>Pseudomonadota</taxon>
        <taxon>Gammaproteobacteria</taxon>
        <taxon>Lysobacterales</taxon>
        <taxon>Lysobacteraceae</taxon>
        <taxon>Xanthomonas</taxon>
    </lineage>
</organism>
<gene>
    <name evidence="1" type="primary">rpsQ</name>
    <name type="ordered locus">XOO3378</name>
</gene>
<reference key="1">
    <citation type="journal article" date="2005" name="Jpn. Agric. Res. Q.">
        <title>Genome sequence of Xanthomonas oryzae pv. oryzae suggests contribution of large numbers of effector genes and insertion sequences to its race diversity.</title>
        <authorList>
            <person name="Ochiai H."/>
            <person name="Inoue Y."/>
            <person name="Takeya M."/>
            <person name="Sasaki A."/>
            <person name="Kaku H."/>
        </authorList>
    </citation>
    <scope>NUCLEOTIDE SEQUENCE [LARGE SCALE GENOMIC DNA]</scope>
    <source>
        <strain>MAFF 311018</strain>
    </source>
</reference>
<accession>Q2NZZ4</accession>
<evidence type="ECO:0000255" key="1">
    <source>
        <dbReference type="HAMAP-Rule" id="MF_01345"/>
    </source>
</evidence>
<evidence type="ECO:0000305" key="2"/>
<proteinExistence type="inferred from homology"/>